<proteinExistence type="inferred from homology"/>
<reference key="1">
    <citation type="journal article" date="2004" name="Proc. Natl. Acad. Sci. U.S.A.">
        <title>Insights into the evolution of Yersinia pestis through whole-genome comparison with Yersinia pseudotuberculosis.</title>
        <authorList>
            <person name="Chain P.S.G."/>
            <person name="Carniel E."/>
            <person name="Larimer F.W."/>
            <person name="Lamerdin J."/>
            <person name="Stoutland P.O."/>
            <person name="Regala W.M."/>
            <person name="Georgescu A.M."/>
            <person name="Vergez L.M."/>
            <person name="Land M.L."/>
            <person name="Motin V.L."/>
            <person name="Brubaker R.R."/>
            <person name="Fowler J."/>
            <person name="Hinnebusch J."/>
            <person name="Marceau M."/>
            <person name="Medigue C."/>
            <person name="Simonet M."/>
            <person name="Chenal-Francisque V."/>
            <person name="Souza B."/>
            <person name="Dacheux D."/>
            <person name="Elliott J.M."/>
            <person name="Derbise A."/>
            <person name="Hauser L.J."/>
            <person name="Garcia E."/>
        </authorList>
    </citation>
    <scope>NUCLEOTIDE SEQUENCE [LARGE SCALE GENOMIC DNA]</scope>
    <source>
        <strain>IP32953</strain>
    </source>
</reference>
<evidence type="ECO:0000255" key="1">
    <source>
        <dbReference type="HAMAP-Rule" id="MF_00044"/>
    </source>
</evidence>
<feature type="chain" id="PRO_0000110987" description="Aspartate--tRNA ligase">
    <location>
        <begin position="1"/>
        <end position="598"/>
    </location>
</feature>
<feature type="region of interest" description="Aspartate" evidence="1">
    <location>
        <begin position="195"/>
        <end position="198"/>
    </location>
</feature>
<feature type="binding site" evidence="1">
    <location>
        <position position="171"/>
    </location>
    <ligand>
        <name>L-aspartate</name>
        <dbReference type="ChEBI" id="CHEBI:29991"/>
    </ligand>
</feature>
<feature type="binding site" evidence="1">
    <location>
        <begin position="217"/>
        <end position="219"/>
    </location>
    <ligand>
        <name>ATP</name>
        <dbReference type="ChEBI" id="CHEBI:30616"/>
    </ligand>
</feature>
<feature type="binding site" evidence="1">
    <location>
        <position position="217"/>
    </location>
    <ligand>
        <name>L-aspartate</name>
        <dbReference type="ChEBI" id="CHEBI:29991"/>
    </ligand>
</feature>
<feature type="binding site" evidence="1">
    <location>
        <position position="226"/>
    </location>
    <ligand>
        <name>ATP</name>
        <dbReference type="ChEBI" id="CHEBI:30616"/>
    </ligand>
</feature>
<feature type="binding site" evidence="1">
    <location>
        <position position="448"/>
    </location>
    <ligand>
        <name>L-aspartate</name>
        <dbReference type="ChEBI" id="CHEBI:29991"/>
    </ligand>
</feature>
<feature type="binding site" evidence="1">
    <location>
        <position position="482"/>
    </location>
    <ligand>
        <name>ATP</name>
        <dbReference type="ChEBI" id="CHEBI:30616"/>
    </ligand>
</feature>
<feature type="binding site" evidence="1">
    <location>
        <position position="489"/>
    </location>
    <ligand>
        <name>L-aspartate</name>
        <dbReference type="ChEBI" id="CHEBI:29991"/>
    </ligand>
</feature>
<feature type="binding site" evidence="1">
    <location>
        <begin position="534"/>
        <end position="537"/>
    </location>
    <ligand>
        <name>ATP</name>
        <dbReference type="ChEBI" id="CHEBI:30616"/>
    </ligand>
</feature>
<gene>
    <name evidence="1" type="primary">aspS</name>
    <name type="ordered locus">YPTB2036</name>
</gene>
<organism>
    <name type="scientific">Yersinia pseudotuberculosis serotype I (strain IP32953)</name>
    <dbReference type="NCBI Taxonomy" id="273123"/>
    <lineage>
        <taxon>Bacteria</taxon>
        <taxon>Pseudomonadati</taxon>
        <taxon>Pseudomonadota</taxon>
        <taxon>Gammaproteobacteria</taxon>
        <taxon>Enterobacterales</taxon>
        <taxon>Yersiniaceae</taxon>
        <taxon>Yersinia</taxon>
    </lineage>
</organism>
<sequence>MRTEYCGQLNLSHVGQSVTLCGWVNRRRDLGGLIFIDMRDREGIVQVFFDPDHKAAFEQASELRNEFCIQITGTVRARPDSQINKDMSTGEVEIFANTLNIINRSEPLPLDSNQINSEEQRLKYRYLDLRRPEMADRLKSRAKITSFVRRFMDDHGFLDIETPMLTKATPEGARDYLVPSRVHKGKFYALPQSPQLFKQLLMMSGFDRYYQIVKCFRDEDLRADRQPEFTQIDVETSFMSADQVREVMEKLVRELWQETKGVDLGDFPVMTFAEAMRRYGSDKPDLRNPLELVDVASLVKDVEFKVFSGPANDAKGRVAALRVPGGAQLSRKQIDEYGQFVGIYGAKGLAWLKVNDRAAGLEGVQSPIAKFLSAEVLDAILVATQAESGDILFFGADSYKIVTDAMGALRLKVGRDLELTRLGTWAPLWVVDFPMFEDDSEGGLTAMHHPFTAPKDMSPEQLAAAPTTAIANAYDMVINGYEVGGGSVRIHRTEMQQTVFGILGITEDEQREKFGFLLDALKFGTPPHAGLAFGLDRLVMLLTGTDNIRDVIAFPKTTAAACLMTDAPSFANPASLQELSISVVAKKGTTDAGAEENQ</sequence>
<accession>Q66AU4</accession>
<name>SYD_YERPS</name>
<protein>
    <recommendedName>
        <fullName evidence="1">Aspartate--tRNA ligase</fullName>
        <ecNumber evidence="1">6.1.1.12</ecNumber>
    </recommendedName>
    <alternativeName>
        <fullName evidence="1">Aspartyl-tRNA synthetase</fullName>
        <shortName evidence="1">AspRS</shortName>
    </alternativeName>
</protein>
<dbReference type="EC" id="6.1.1.12" evidence="1"/>
<dbReference type="EMBL" id="BX936398">
    <property type="protein sequence ID" value="CAH21274.1"/>
    <property type="molecule type" value="Genomic_DNA"/>
</dbReference>
<dbReference type="RefSeq" id="WP_002211204.1">
    <property type="nucleotide sequence ID" value="NZ_CP009712.1"/>
</dbReference>
<dbReference type="SMR" id="Q66AU4"/>
<dbReference type="GeneID" id="57976608"/>
<dbReference type="KEGG" id="ypo:BZ17_429"/>
<dbReference type="KEGG" id="yps:YPTB2036"/>
<dbReference type="PATRIC" id="fig|273123.14.peg.458"/>
<dbReference type="Proteomes" id="UP000001011">
    <property type="component" value="Chromosome"/>
</dbReference>
<dbReference type="GO" id="GO:0005737">
    <property type="term" value="C:cytoplasm"/>
    <property type="evidence" value="ECO:0007669"/>
    <property type="project" value="UniProtKB-SubCell"/>
</dbReference>
<dbReference type="GO" id="GO:0004815">
    <property type="term" value="F:aspartate-tRNA ligase activity"/>
    <property type="evidence" value="ECO:0007669"/>
    <property type="project" value="UniProtKB-UniRule"/>
</dbReference>
<dbReference type="GO" id="GO:0005524">
    <property type="term" value="F:ATP binding"/>
    <property type="evidence" value="ECO:0007669"/>
    <property type="project" value="UniProtKB-UniRule"/>
</dbReference>
<dbReference type="GO" id="GO:0003676">
    <property type="term" value="F:nucleic acid binding"/>
    <property type="evidence" value="ECO:0007669"/>
    <property type="project" value="InterPro"/>
</dbReference>
<dbReference type="GO" id="GO:0006422">
    <property type="term" value="P:aspartyl-tRNA aminoacylation"/>
    <property type="evidence" value="ECO:0007669"/>
    <property type="project" value="UniProtKB-UniRule"/>
</dbReference>
<dbReference type="CDD" id="cd00777">
    <property type="entry name" value="AspRS_core"/>
    <property type="match status" value="1"/>
</dbReference>
<dbReference type="CDD" id="cd04317">
    <property type="entry name" value="EcAspRS_like_N"/>
    <property type="match status" value="1"/>
</dbReference>
<dbReference type="FunFam" id="2.40.50.140:FF:000080">
    <property type="entry name" value="Aspartate--tRNA ligase"/>
    <property type="match status" value="1"/>
</dbReference>
<dbReference type="Gene3D" id="3.30.930.10">
    <property type="entry name" value="Bira Bifunctional Protein, Domain 2"/>
    <property type="match status" value="1"/>
</dbReference>
<dbReference type="Gene3D" id="3.30.1360.30">
    <property type="entry name" value="GAD-like domain"/>
    <property type="match status" value="1"/>
</dbReference>
<dbReference type="Gene3D" id="2.40.50.140">
    <property type="entry name" value="Nucleic acid-binding proteins"/>
    <property type="match status" value="1"/>
</dbReference>
<dbReference type="HAMAP" id="MF_00044">
    <property type="entry name" value="Asp_tRNA_synth_type1"/>
    <property type="match status" value="1"/>
</dbReference>
<dbReference type="InterPro" id="IPR004364">
    <property type="entry name" value="Aa-tRNA-synt_II"/>
</dbReference>
<dbReference type="InterPro" id="IPR006195">
    <property type="entry name" value="aa-tRNA-synth_II"/>
</dbReference>
<dbReference type="InterPro" id="IPR045864">
    <property type="entry name" value="aa-tRNA-synth_II/BPL/LPL"/>
</dbReference>
<dbReference type="InterPro" id="IPR004524">
    <property type="entry name" value="Asp-tRNA-ligase_1"/>
</dbReference>
<dbReference type="InterPro" id="IPR047089">
    <property type="entry name" value="Asp-tRNA-ligase_1_N"/>
</dbReference>
<dbReference type="InterPro" id="IPR002312">
    <property type="entry name" value="Asp/Asn-tRNA-synth_IIb"/>
</dbReference>
<dbReference type="InterPro" id="IPR047090">
    <property type="entry name" value="AspRS_core"/>
</dbReference>
<dbReference type="InterPro" id="IPR004115">
    <property type="entry name" value="GAD-like_sf"/>
</dbReference>
<dbReference type="InterPro" id="IPR029351">
    <property type="entry name" value="GAD_dom"/>
</dbReference>
<dbReference type="InterPro" id="IPR012340">
    <property type="entry name" value="NA-bd_OB-fold"/>
</dbReference>
<dbReference type="InterPro" id="IPR004365">
    <property type="entry name" value="NA-bd_OB_tRNA"/>
</dbReference>
<dbReference type="NCBIfam" id="TIGR00459">
    <property type="entry name" value="aspS_bact"/>
    <property type="match status" value="1"/>
</dbReference>
<dbReference type="NCBIfam" id="NF001750">
    <property type="entry name" value="PRK00476.1"/>
    <property type="match status" value="1"/>
</dbReference>
<dbReference type="PANTHER" id="PTHR22594:SF5">
    <property type="entry name" value="ASPARTATE--TRNA LIGASE, MITOCHONDRIAL"/>
    <property type="match status" value="1"/>
</dbReference>
<dbReference type="PANTHER" id="PTHR22594">
    <property type="entry name" value="ASPARTYL/LYSYL-TRNA SYNTHETASE"/>
    <property type="match status" value="1"/>
</dbReference>
<dbReference type="Pfam" id="PF02938">
    <property type="entry name" value="GAD"/>
    <property type="match status" value="1"/>
</dbReference>
<dbReference type="Pfam" id="PF00152">
    <property type="entry name" value="tRNA-synt_2"/>
    <property type="match status" value="1"/>
</dbReference>
<dbReference type="Pfam" id="PF01336">
    <property type="entry name" value="tRNA_anti-codon"/>
    <property type="match status" value="1"/>
</dbReference>
<dbReference type="PRINTS" id="PR01042">
    <property type="entry name" value="TRNASYNTHASP"/>
</dbReference>
<dbReference type="SUPFAM" id="SSF55681">
    <property type="entry name" value="Class II aaRS and biotin synthetases"/>
    <property type="match status" value="1"/>
</dbReference>
<dbReference type="SUPFAM" id="SSF55261">
    <property type="entry name" value="GAD domain-like"/>
    <property type="match status" value="1"/>
</dbReference>
<dbReference type="SUPFAM" id="SSF50249">
    <property type="entry name" value="Nucleic acid-binding proteins"/>
    <property type="match status" value="1"/>
</dbReference>
<dbReference type="PROSITE" id="PS50862">
    <property type="entry name" value="AA_TRNA_LIGASE_II"/>
    <property type="match status" value="1"/>
</dbReference>
<keyword id="KW-0030">Aminoacyl-tRNA synthetase</keyword>
<keyword id="KW-0067">ATP-binding</keyword>
<keyword id="KW-0963">Cytoplasm</keyword>
<keyword id="KW-0436">Ligase</keyword>
<keyword id="KW-0547">Nucleotide-binding</keyword>
<keyword id="KW-0648">Protein biosynthesis</keyword>
<comment type="function">
    <text evidence="1">Catalyzes the attachment of L-aspartate to tRNA(Asp) in a two-step reaction: L-aspartate is first activated by ATP to form Asp-AMP and then transferred to the acceptor end of tRNA(Asp).</text>
</comment>
<comment type="catalytic activity">
    <reaction evidence="1">
        <text>tRNA(Asp) + L-aspartate + ATP = L-aspartyl-tRNA(Asp) + AMP + diphosphate</text>
        <dbReference type="Rhea" id="RHEA:19649"/>
        <dbReference type="Rhea" id="RHEA-COMP:9660"/>
        <dbReference type="Rhea" id="RHEA-COMP:9678"/>
        <dbReference type="ChEBI" id="CHEBI:29991"/>
        <dbReference type="ChEBI" id="CHEBI:30616"/>
        <dbReference type="ChEBI" id="CHEBI:33019"/>
        <dbReference type="ChEBI" id="CHEBI:78442"/>
        <dbReference type="ChEBI" id="CHEBI:78516"/>
        <dbReference type="ChEBI" id="CHEBI:456215"/>
        <dbReference type="EC" id="6.1.1.12"/>
    </reaction>
</comment>
<comment type="subunit">
    <text evidence="1">Homodimer.</text>
</comment>
<comment type="subcellular location">
    <subcellularLocation>
        <location evidence="1">Cytoplasm</location>
    </subcellularLocation>
</comment>
<comment type="similarity">
    <text evidence="1">Belongs to the class-II aminoacyl-tRNA synthetase family. Type 1 subfamily.</text>
</comment>